<protein>
    <recommendedName>
        <fullName>Zinc finger matrin-type protein 4</fullName>
    </recommendedName>
</protein>
<accession>Q9H898</accession>
<accession>Q8WUT8</accession>
<keyword id="KW-0025">Alternative splicing</keyword>
<keyword id="KW-0238">DNA-binding</keyword>
<keyword id="KW-0479">Metal-binding</keyword>
<keyword id="KW-0539">Nucleus</keyword>
<keyword id="KW-1267">Proteomics identification</keyword>
<keyword id="KW-1185">Reference proteome</keyword>
<keyword id="KW-0677">Repeat</keyword>
<keyword id="KW-0862">Zinc</keyword>
<keyword id="KW-0863">Zinc-finger</keyword>
<name>ZMAT4_HUMAN</name>
<reference key="1">
    <citation type="journal article" date="2004" name="Nat. Genet.">
        <title>Complete sequencing and characterization of 21,243 full-length human cDNAs.</title>
        <authorList>
            <person name="Ota T."/>
            <person name="Suzuki Y."/>
            <person name="Nishikawa T."/>
            <person name="Otsuki T."/>
            <person name="Sugiyama T."/>
            <person name="Irie R."/>
            <person name="Wakamatsu A."/>
            <person name="Hayashi K."/>
            <person name="Sato H."/>
            <person name="Nagai K."/>
            <person name="Kimura K."/>
            <person name="Makita H."/>
            <person name="Sekine M."/>
            <person name="Obayashi M."/>
            <person name="Nishi T."/>
            <person name="Shibahara T."/>
            <person name="Tanaka T."/>
            <person name="Ishii S."/>
            <person name="Yamamoto J."/>
            <person name="Saito K."/>
            <person name="Kawai Y."/>
            <person name="Isono Y."/>
            <person name="Nakamura Y."/>
            <person name="Nagahari K."/>
            <person name="Murakami K."/>
            <person name="Yasuda T."/>
            <person name="Iwayanagi T."/>
            <person name="Wagatsuma M."/>
            <person name="Shiratori A."/>
            <person name="Sudo H."/>
            <person name="Hosoiri T."/>
            <person name="Kaku Y."/>
            <person name="Kodaira H."/>
            <person name="Kondo H."/>
            <person name="Sugawara M."/>
            <person name="Takahashi M."/>
            <person name="Kanda K."/>
            <person name="Yokoi T."/>
            <person name="Furuya T."/>
            <person name="Kikkawa E."/>
            <person name="Omura Y."/>
            <person name="Abe K."/>
            <person name="Kamihara K."/>
            <person name="Katsuta N."/>
            <person name="Sato K."/>
            <person name="Tanikawa M."/>
            <person name="Yamazaki M."/>
            <person name="Ninomiya K."/>
            <person name="Ishibashi T."/>
            <person name="Yamashita H."/>
            <person name="Murakawa K."/>
            <person name="Fujimori K."/>
            <person name="Tanai H."/>
            <person name="Kimata M."/>
            <person name="Watanabe M."/>
            <person name="Hiraoka S."/>
            <person name="Chiba Y."/>
            <person name="Ishida S."/>
            <person name="Ono Y."/>
            <person name="Takiguchi S."/>
            <person name="Watanabe S."/>
            <person name="Yosida M."/>
            <person name="Hotuta T."/>
            <person name="Kusano J."/>
            <person name="Kanehori K."/>
            <person name="Takahashi-Fujii A."/>
            <person name="Hara H."/>
            <person name="Tanase T.-O."/>
            <person name="Nomura Y."/>
            <person name="Togiya S."/>
            <person name="Komai F."/>
            <person name="Hara R."/>
            <person name="Takeuchi K."/>
            <person name="Arita M."/>
            <person name="Imose N."/>
            <person name="Musashino K."/>
            <person name="Yuuki H."/>
            <person name="Oshima A."/>
            <person name="Sasaki N."/>
            <person name="Aotsuka S."/>
            <person name="Yoshikawa Y."/>
            <person name="Matsunawa H."/>
            <person name="Ichihara T."/>
            <person name="Shiohata N."/>
            <person name="Sano S."/>
            <person name="Moriya S."/>
            <person name="Momiyama H."/>
            <person name="Satoh N."/>
            <person name="Takami S."/>
            <person name="Terashima Y."/>
            <person name="Suzuki O."/>
            <person name="Nakagawa S."/>
            <person name="Senoh A."/>
            <person name="Mizoguchi H."/>
            <person name="Goto Y."/>
            <person name="Shimizu F."/>
            <person name="Wakebe H."/>
            <person name="Hishigaki H."/>
            <person name="Watanabe T."/>
            <person name="Sugiyama A."/>
            <person name="Takemoto M."/>
            <person name="Kawakami B."/>
            <person name="Yamazaki M."/>
            <person name="Watanabe K."/>
            <person name="Kumagai A."/>
            <person name="Itakura S."/>
            <person name="Fukuzumi Y."/>
            <person name="Fujimori Y."/>
            <person name="Komiyama M."/>
            <person name="Tashiro H."/>
            <person name="Tanigami A."/>
            <person name="Fujiwara T."/>
            <person name="Ono T."/>
            <person name="Yamada K."/>
            <person name="Fujii Y."/>
            <person name="Ozaki K."/>
            <person name="Hirao M."/>
            <person name="Ohmori Y."/>
            <person name="Kawabata A."/>
            <person name="Hikiji T."/>
            <person name="Kobatake N."/>
            <person name="Inagaki H."/>
            <person name="Ikema Y."/>
            <person name="Okamoto S."/>
            <person name="Okitani R."/>
            <person name="Kawakami T."/>
            <person name="Noguchi S."/>
            <person name="Itoh T."/>
            <person name="Shigeta K."/>
            <person name="Senba T."/>
            <person name="Matsumura K."/>
            <person name="Nakajima Y."/>
            <person name="Mizuno T."/>
            <person name="Morinaga M."/>
            <person name="Sasaki M."/>
            <person name="Togashi T."/>
            <person name="Oyama M."/>
            <person name="Hata H."/>
            <person name="Watanabe M."/>
            <person name="Komatsu T."/>
            <person name="Mizushima-Sugano J."/>
            <person name="Satoh T."/>
            <person name="Shirai Y."/>
            <person name="Takahashi Y."/>
            <person name="Nakagawa K."/>
            <person name="Okumura K."/>
            <person name="Nagase T."/>
            <person name="Nomura N."/>
            <person name="Kikuchi H."/>
            <person name="Masuho Y."/>
            <person name="Yamashita R."/>
            <person name="Nakai K."/>
            <person name="Yada T."/>
            <person name="Nakamura Y."/>
            <person name="Ohara O."/>
            <person name="Isogai T."/>
            <person name="Sugano S."/>
        </authorList>
    </citation>
    <scope>NUCLEOTIDE SEQUENCE [LARGE SCALE MRNA] (ISOFORM 1)</scope>
    <source>
        <tissue>Thyroid</tissue>
    </source>
</reference>
<reference key="2">
    <citation type="journal article" date="2004" name="Genome Res.">
        <title>The status, quality, and expansion of the NIH full-length cDNA project: the Mammalian Gene Collection (MGC).</title>
        <authorList>
            <consortium name="The MGC Project Team"/>
        </authorList>
    </citation>
    <scope>NUCLEOTIDE SEQUENCE [LARGE SCALE MRNA] (ISOFORM 2)</scope>
    <scope>VARIANT ALA-201</scope>
    <source>
        <tissue>Brain</tissue>
    </source>
</reference>
<proteinExistence type="evidence at protein level"/>
<comment type="interaction">
    <interactant intactId="EBI-2548542">
        <id>Q9H898</id>
    </interactant>
    <interactant intactId="EBI-456129">
        <id>Q13618</id>
        <label>CUL3</label>
    </interactant>
    <organismsDiffer>false</organismsDiffer>
    <experiments>3</experiments>
</comment>
<comment type="interaction">
    <interactant intactId="EBI-11529334">
        <id>Q9H898-2</id>
    </interactant>
    <interactant intactId="EBI-12002366">
        <id>P78563-4</id>
        <label>ADARB1</label>
    </interactant>
    <organismsDiffer>false</organismsDiffer>
    <experiments>3</experiments>
</comment>
<comment type="interaction">
    <interactant intactId="EBI-11529334">
        <id>Q9H898-2</id>
    </interactant>
    <interactant intactId="EBI-456129">
        <id>Q13618</id>
        <label>CUL3</label>
    </interactant>
    <organismsDiffer>false</organismsDiffer>
    <experiments>3</experiments>
</comment>
<comment type="interaction">
    <interactant intactId="EBI-11529334">
        <id>Q9H898-2</id>
    </interactant>
    <interactant intactId="EBI-456067">
        <id>Q13620</id>
        <label>CUL4B</label>
    </interactant>
    <organismsDiffer>false</organismsDiffer>
    <experiments>3</experiments>
</comment>
<comment type="interaction">
    <interactant intactId="EBI-11529334">
        <id>Q9H898-2</id>
    </interactant>
    <interactant intactId="EBI-720984">
        <id>Q6UWE0</id>
        <label>LRSAM1</label>
    </interactant>
    <organismsDiffer>false</organismsDiffer>
    <experiments>3</experiments>
</comment>
<comment type="interaction">
    <interactant intactId="EBI-11529334">
        <id>Q9H898-2</id>
    </interactant>
    <interactant intactId="EBI-713955">
        <id>O75569</id>
        <label>PRKRA</label>
    </interactant>
    <organismsDiffer>false</organismsDiffer>
    <experiments>4</experiments>
</comment>
<comment type="interaction">
    <interactant intactId="EBI-11529334">
        <id>Q9H898-2</id>
    </interactant>
    <interactant intactId="EBI-16433759">
        <id>A0A0S2Z5K8</id>
        <label>STRBP</label>
    </interactant>
    <organismsDiffer>false</organismsDiffer>
    <experiments>3</experiments>
</comment>
<comment type="interaction">
    <interactant intactId="EBI-11529334">
        <id>Q9H898-2</id>
    </interactant>
    <interactant intactId="EBI-740355">
        <id>Q96SI9</id>
        <label>STRBP</label>
    </interactant>
    <organismsDiffer>false</organismsDiffer>
    <experiments>3</experiments>
</comment>
<comment type="interaction">
    <interactant intactId="EBI-11529334">
        <id>Q9H898-2</id>
    </interactant>
    <interactant intactId="EBI-978581">
        <id>Q15633</id>
        <label>TARBP2</label>
    </interactant>
    <organismsDiffer>false</organismsDiffer>
    <experiments>3</experiments>
</comment>
<comment type="interaction">
    <interactant intactId="EBI-11529334">
        <id>Q9H898-2</id>
    </interactant>
    <interactant intactId="EBI-11529334">
        <id>Q9H898-2</id>
        <label>ZMAT4</label>
    </interactant>
    <organismsDiffer>false</organismsDiffer>
    <experiments>3</experiments>
</comment>
<comment type="subcellular location">
    <subcellularLocation>
        <location evidence="4">Nucleus</location>
    </subcellularLocation>
</comment>
<comment type="alternative products">
    <event type="alternative splicing"/>
    <isoform>
        <id>Q9H898-1</id>
        <name>1</name>
        <sequence type="displayed"/>
    </isoform>
    <isoform>
        <id>Q9H898-2</id>
        <name>2</name>
        <sequence type="described" ref="VSP_027476"/>
    </isoform>
</comment>
<dbReference type="EMBL" id="AK023904">
    <property type="protein sequence ID" value="BAB14719.1"/>
    <property type="molecule type" value="mRNA"/>
</dbReference>
<dbReference type="EMBL" id="BC019598">
    <property type="protein sequence ID" value="AAH19598.1"/>
    <property type="molecule type" value="mRNA"/>
</dbReference>
<dbReference type="CCDS" id="CCDS34885.1">
    <molecule id="Q9H898-1"/>
</dbReference>
<dbReference type="CCDS" id="CCDS47848.1">
    <molecule id="Q9H898-2"/>
</dbReference>
<dbReference type="RefSeq" id="NP_001129203.1">
    <molecule id="Q9H898-2"/>
    <property type="nucleotide sequence ID" value="NM_001135731.2"/>
</dbReference>
<dbReference type="RefSeq" id="NP_078921.1">
    <molecule id="Q9H898-1"/>
    <property type="nucleotide sequence ID" value="NM_024645.3"/>
</dbReference>
<dbReference type="SMR" id="Q9H898"/>
<dbReference type="BioGRID" id="122819">
    <property type="interactions" value="32"/>
</dbReference>
<dbReference type="FunCoup" id="Q9H898">
    <property type="interactions" value="78"/>
</dbReference>
<dbReference type="IntAct" id="Q9H898">
    <property type="interactions" value="29"/>
</dbReference>
<dbReference type="STRING" id="9606.ENSP00000297737"/>
<dbReference type="iPTMnet" id="Q9H898"/>
<dbReference type="PhosphoSitePlus" id="Q9H898"/>
<dbReference type="BioMuta" id="ZMAT4"/>
<dbReference type="DMDM" id="74733790"/>
<dbReference type="jPOST" id="Q9H898"/>
<dbReference type="MassIVE" id="Q9H898"/>
<dbReference type="PaxDb" id="9606-ENSP00000297737"/>
<dbReference type="PeptideAtlas" id="Q9H898"/>
<dbReference type="ProteomicsDB" id="81200">
    <molecule id="Q9H898-1"/>
</dbReference>
<dbReference type="ProteomicsDB" id="81201">
    <molecule id="Q9H898-2"/>
</dbReference>
<dbReference type="Antibodypedia" id="23910">
    <property type="antibodies" value="150 antibodies from 17 providers"/>
</dbReference>
<dbReference type="DNASU" id="79698"/>
<dbReference type="Ensembl" id="ENST00000297737.11">
    <molecule id="Q9H898-1"/>
    <property type="protein sequence ID" value="ENSP00000297737.6"/>
    <property type="gene ID" value="ENSG00000165061.15"/>
</dbReference>
<dbReference type="Ensembl" id="ENST00000315769.11">
    <molecule id="Q9H898-2"/>
    <property type="protein sequence ID" value="ENSP00000319785.7"/>
    <property type="gene ID" value="ENSG00000165061.15"/>
</dbReference>
<dbReference type="GeneID" id="79698"/>
<dbReference type="KEGG" id="hsa:79698"/>
<dbReference type="MANE-Select" id="ENST00000297737.11">
    <property type="protein sequence ID" value="ENSP00000297737.6"/>
    <property type="RefSeq nucleotide sequence ID" value="NM_024645.3"/>
    <property type="RefSeq protein sequence ID" value="NP_078921.1"/>
</dbReference>
<dbReference type="UCSC" id="uc003xnr.5">
    <molecule id="Q9H898-1"/>
    <property type="organism name" value="human"/>
</dbReference>
<dbReference type="AGR" id="HGNC:25844"/>
<dbReference type="CTD" id="79698"/>
<dbReference type="DisGeNET" id="79698"/>
<dbReference type="GeneCards" id="ZMAT4"/>
<dbReference type="HGNC" id="HGNC:25844">
    <property type="gene designation" value="ZMAT4"/>
</dbReference>
<dbReference type="HPA" id="ENSG00000165061">
    <property type="expression patterns" value="Group enriched (brain, retina, thyroid gland)"/>
</dbReference>
<dbReference type="neXtProt" id="NX_Q9H898"/>
<dbReference type="OpenTargets" id="ENSG00000165061"/>
<dbReference type="PharmGKB" id="PA142670525"/>
<dbReference type="VEuPathDB" id="HostDB:ENSG00000165061"/>
<dbReference type="eggNOG" id="ENOG502QTR6">
    <property type="taxonomic scope" value="Eukaryota"/>
</dbReference>
<dbReference type="GeneTree" id="ENSGT00940000156888"/>
<dbReference type="HOGENOM" id="CLU_056875_2_0_1"/>
<dbReference type="InParanoid" id="Q9H898"/>
<dbReference type="OMA" id="RVAHYEX"/>
<dbReference type="OrthoDB" id="1925236at2759"/>
<dbReference type="PAN-GO" id="Q9H898">
    <property type="GO annotations" value="0 GO annotations based on evolutionary models"/>
</dbReference>
<dbReference type="PhylomeDB" id="Q9H898"/>
<dbReference type="TreeFam" id="TF350019"/>
<dbReference type="PathwayCommons" id="Q9H898"/>
<dbReference type="SignaLink" id="Q9H898"/>
<dbReference type="BioGRID-ORCS" id="79698">
    <property type="hits" value="16 hits in 1150 CRISPR screens"/>
</dbReference>
<dbReference type="CD-CODE" id="91857CE7">
    <property type="entry name" value="Nucleolus"/>
</dbReference>
<dbReference type="ChiTaRS" id="ZMAT4">
    <property type="organism name" value="human"/>
</dbReference>
<dbReference type="GenomeRNAi" id="79698"/>
<dbReference type="Pharos" id="Q9H898">
    <property type="development level" value="Tbio"/>
</dbReference>
<dbReference type="PRO" id="PR:Q9H898"/>
<dbReference type="Proteomes" id="UP000005640">
    <property type="component" value="Chromosome 8"/>
</dbReference>
<dbReference type="RNAct" id="Q9H898">
    <property type="molecule type" value="protein"/>
</dbReference>
<dbReference type="Bgee" id="ENSG00000165061">
    <property type="expression patterns" value="Expressed in middle temporal gyrus and 121 other cell types or tissues"/>
</dbReference>
<dbReference type="ExpressionAtlas" id="Q9H898">
    <property type="expression patterns" value="baseline and differential"/>
</dbReference>
<dbReference type="GO" id="GO:0005634">
    <property type="term" value="C:nucleus"/>
    <property type="evidence" value="ECO:0007669"/>
    <property type="project" value="UniProtKB-SubCell"/>
</dbReference>
<dbReference type="GO" id="GO:0003677">
    <property type="term" value="F:DNA binding"/>
    <property type="evidence" value="ECO:0007669"/>
    <property type="project" value="UniProtKB-KW"/>
</dbReference>
<dbReference type="GO" id="GO:0042802">
    <property type="term" value="F:identical protein binding"/>
    <property type="evidence" value="ECO:0000353"/>
    <property type="project" value="IntAct"/>
</dbReference>
<dbReference type="GO" id="GO:0008270">
    <property type="term" value="F:zinc ion binding"/>
    <property type="evidence" value="ECO:0007669"/>
    <property type="project" value="UniProtKB-KW"/>
</dbReference>
<dbReference type="Gene3D" id="3.30.160.60">
    <property type="entry name" value="Classic Zinc Finger"/>
    <property type="match status" value="4"/>
</dbReference>
<dbReference type="InterPro" id="IPR003604">
    <property type="entry name" value="Matrin/U1-like-C_Znf_C2H2"/>
</dbReference>
<dbReference type="InterPro" id="IPR051868">
    <property type="entry name" value="ZN346_ZMAT4"/>
</dbReference>
<dbReference type="InterPro" id="IPR022755">
    <property type="entry name" value="Znf_C2H2_jaz"/>
</dbReference>
<dbReference type="InterPro" id="IPR036236">
    <property type="entry name" value="Znf_C2H2_sf"/>
</dbReference>
<dbReference type="InterPro" id="IPR013087">
    <property type="entry name" value="Znf_C2H2_type"/>
</dbReference>
<dbReference type="PANTHER" id="PTHR46144:SF3">
    <property type="entry name" value="ZINC FINGER MATRIN-TYPE PROTEIN 4"/>
    <property type="match status" value="1"/>
</dbReference>
<dbReference type="PANTHER" id="PTHR46144">
    <property type="entry name" value="ZINC FINGER PROTEIN 385B-LIKE"/>
    <property type="match status" value="1"/>
</dbReference>
<dbReference type="Pfam" id="PF12171">
    <property type="entry name" value="zf-C2H2_jaz"/>
    <property type="match status" value="1"/>
</dbReference>
<dbReference type="Pfam" id="PF12874">
    <property type="entry name" value="zf-met"/>
    <property type="match status" value="3"/>
</dbReference>
<dbReference type="SMART" id="SM00355">
    <property type="entry name" value="ZnF_C2H2"/>
    <property type="match status" value="4"/>
</dbReference>
<dbReference type="SMART" id="SM00451">
    <property type="entry name" value="ZnF_U1"/>
    <property type="match status" value="4"/>
</dbReference>
<dbReference type="SUPFAM" id="SSF57667">
    <property type="entry name" value="beta-beta-alpha zinc fingers"/>
    <property type="match status" value="4"/>
</dbReference>
<gene>
    <name type="primary">ZMAT4</name>
</gene>
<feature type="chain" id="PRO_0000298916" description="Zinc finger matrin-type protein 4">
    <location>
        <begin position="1"/>
        <end position="229"/>
    </location>
</feature>
<feature type="zinc finger region" description="Matrin-type 1">
    <location>
        <begin position="14"/>
        <end position="44"/>
    </location>
</feature>
<feature type="zinc finger region" description="Matrin-type 2">
    <location>
        <begin position="72"/>
        <end position="106"/>
    </location>
</feature>
<feature type="zinc finger region" description="Matrin-type 3">
    <location>
        <begin position="145"/>
        <end position="175"/>
    </location>
</feature>
<feature type="zinc finger region" description="Matrin-type 4">
    <location>
        <begin position="198"/>
        <end position="228"/>
    </location>
</feature>
<feature type="region of interest" description="Disordered" evidence="1">
    <location>
        <begin position="116"/>
        <end position="135"/>
    </location>
</feature>
<feature type="splice variant" id="VSP_027476" description="In isoform 2." evidence="3">
    <location>
        <begin position="117"/>
        <end position="192"/>
    </location>
</feature>
<feature type="sequence variant" id="VAR_034736" description="In dbSNP:rs17851751." evidence="2">
    <original>T</original>
    <variation>A</variation>
    <location>
        <position position="201"/>
    </location>
</feature>
<evidence type="ECO:0000256" key="1">
    <source>
        <dbReference type="SAM" id="MobiDB-lite"/>
    </source>
</evidence>
<evidence type="ECO:0000269" key="2">
    <source>
    </source>
</evidence>
<evidence type="ECO:0000303" key="3">
    <source>
    </source>
</evidence>
<evidence type="ECO:0000305" key="4"/>
<sequence length="229" mass="25833">MKSSDIDQDLFTDSYCKVCSAQLISESQRVAHYESRKHASKVRLYYMLHPRDGGCPAKRLRSENGSDADMVDKNKCCTLCNMSFTSAVVADSHYQGKIHAKRLKLLLGEKTPLKTTATPLSPLKPPRMDTAPVVASPYQRRDSDRYCGLCAAWFNNPLMAQQHYDGKKHKKNAARVALLEQLGTTLDMGELRGLRRNYRCTICSVSLNSIEQYHAHLKGSKHQTNLKNK</sequence>
<organism>
    <name type="scientific">Homo sapiens</name>
    <name type="common">Human</name>
    <dbReference type="NCBI Taxonomy" id="9606"/>
    <lineage>
        <taxon>Eukaryota</taxon>
        <taxon>Metazoa</taxon>
        <taxon>Chordata</taxon>
        <taxon>Craniata</taxon>
        <taxon>Vertebrata</taxon>
        <taxon>Euteleostomi</taxon>
        <taxon>Mammalia</taxon>
        <taxon>Eutheria</taxon>
        <taxon>Euarchontoglires</taxon>
        <taxon>Primates</taxon>
        <taxon>Haplorrhini</taxon>
        <taxon>Catarrhini</taxon>
        <taxon>Hominidae</taxon>
        <taxon>Homo</taxon>
    </lineage>
</organism>